<name>R1A_CVBQ</name>
<organismHost>
    <name type="scientific">Bos taurus</name>
    <name type="common">Bovine</name>
    <dbReference type="NCBI Taxonomy" id="9913"/>
</organismHost>
<proteinExistence type="inferred from homology"/>
<protein>
    <recommendedName>
        <fullName>Replicase polyprotein 1a</fullName>
        <shortName>pp1a</shortName>
    </recommendedName>
    <alternativeName>
        <fullName>ORF1a polyprotein</fullName>
    </alternativeName>
    <component>
        <recommendedName>
            <fullName>Non-structural protein 1</fullName>
            <shortName>nsp1</shortName>
        </recommendedName>
        <alternativeName>
            <fullName>p28</fullName>
        </alternativeName>
    </component>
    <component>
        <recommendedName>
            <fullName>Non-structural protein 2</fullName>
            <shortName>nsp2</shortName>
        </recommendedName>
        <alternativeName>
            <fullName>p65</fullName>
        </alternativeName>
    </component>
    <component>
        <recommendedName>
            <fullName>Papain-like protease nsp3</fullName>
            <shortName>PL-PRO</shortName>
            <ecNumber>3.4.19.12</ecNumber>
            <ecNumber>3.4.22.-</ecNumber>
        </recommendedName>
        <alternativeName>
            <fullName>Non-structural protein 3</fullName>
            <shortName>nsp3</shortName>
        </alternativeName>
        <alternativeName>
            <fullName>PL1-PRO/PL2-PRO</fullName>
        </alternativeName>
        <alternativeName>
            <fullName>PL1/PL2</fullName>
        </alternativeName>
        <alternativeName>
            <fullName>PL2-PRO</fullName>
        </alternativeName>
        <alternativeName>
            <fullName>Papain-like proteinases 1/2</fullName>
        </alternativeName>
        <alternativeName>
            <fullName>p210</fullName>
        </alternativeName>
    </component>
    <component>
        <recommendedName>
            <fullName>Non-structural protein 4</fullName>
            <shortName>nsp4</shortName>
        </recommendedName>
        <alternativeName>
            <fullName>Peptide HD2</fullName>
        </alternativeName>
        <alternativeName>
            <fullName>p44</fullName>
        </alternativeName>
    </component>
    <component>
        <recommendedName>
            <fullName>3C-like proteinase nsp5</fullName>
            <shortName>3CL-PRO</shortName>
            <shortName>3CLp</shortName>
            <ecNumber>3.4.22.69</ecNumber>
        </recommendedName>
        <alternativeName>
            <fullName>M-PRO</fullName>
        </alternativeName>
        <alternativeName>
            <fullName>nsp5</fullName>
        </alternativeName>
        <alternativeName>
            <fullName>p27</fullName>
        </alternativeName>
    </component>
    <component>
        <recommendedName>
            <fullName>Non-structural protein 6</fullName>
            <shortName>nsp6</shortName>
        </recommendedName>
    </component>
    <component>
        <recommendedName>
            <fullName>Non-structural protein 7</fullName>
            <shortName>nsp7</shortName>
        </recommendedName>
        <alternativeName>
            <fullName>p10</fullName>
        </alternativeName>
    </component>
    <component>
        <recommendedName>
            <fullName>Non-structural protein 8</fullName>
            <shortName>nsp8</shortName>
        </recommendedName>
        <alternativeName>
            <fullName>p22</fullName>
        </alternativeName>
    </component>
    <component>
        <recommendedName>
            <fullName>RNA-capping enzyme subunit nsp9</fullName>
        </recommendedName>
        <alternativeName>
            <fullName>Non-structural protein 9</fullName>
            <shortName>nsp9</shortName>
            <ecNumber>2.7.7.50</ecNumber>
        </alternativeName>
        <alternativeName>
            <fullName>p12</fullName>
        </alternativeName>
    </component>
    <component>
        <recommendedName>
            <fullName>Non-structural protein 10</fullName>
            <shortName>nsp10</shortName>
        </recommendedName>
        <alternativeName>
            <fullName>Growth factor-like peptide</fullName>
            <shortName>GFL</shortName>
        </alternativeName>
        <alternativeName>
            <fullName>p15</fullName>
        </alternativeName>
    </component>
    <component>
        <recommendedName>
            <fullName>Non-structural protein 11</fullName>
            <shortName>nsp11</shortName>
        </recommendedName>
    </component>
</protein>
<reference key="1">
    <citation type="submission" date="1999-12" db="EMBL/GenBank/DDBJ databases">
        <title>Bovine coronavirus (Quebec strain) full-length genomic sequence.</title>
        <authorList>
            <person name="Yoo D."/>
            <person name="Pei Y."/>
            <person name="Parker M.D."/>
            <person name="Cox G.J."/>
        </authorList>
    </citation>
    <scope>NUCLEOTIDE SEQUENCE [GENOMIC RNA]</scope>
</reference>
<sequence length="4383" mass="490178">MSKINKYGLELHWAPEFPWMFEDAEEKLDNPSSSEVDIVCSTTAQKLETGGICPENHVMVDCRRLLKQECCVQSSLIREIVMNTRPYDLEVLLQDALQSREAVLVTPPLGMSLEACYVRGCNPNGWTMGLFRRRSVCNTGRCAVNKHVAYQLYMIDPAGVCFGAGQFVGWVIPLAFMPVQSRKFIAPWVMYLRKCGEKGAYIKDYKRGGFEHVYNFKVEDAYDLVHDEPKGKFSKKAYALIRGYRGVKPLLYVDQYGCDYTGGLADGLEAYADKTLQEMKALFPIWSQELPFDVTVAWHVVRDPRYVMRLQSASTIRSVAYVANPTEDLCDGSVVIKEPVHVYADDSIILRQHNLVDIMSCFYMEADAVVNAFYGVDLKDCGFVMQFGYIDCEQDLCDFKGWVPGNMIDGFACTTCGHVYETGDLLAQSSGVLPVNPVLHTKSAAGYGGFGCKDSFTLYGQTVVYFGGCVYWSPARNIWIPILKSSVKSYDGLVYTGVVGCKAIVKETNLICKALYLDYVQHKCGNLHQRELLGVSDVWHKQLLLNRGVYKPLLENIDYFNMRRAKFSLETFTVCADGFMPFLLDDLVPRAYYLAVSGQAFCDYAGKICHAVVSKSKELLDVSVDSLGAAIHYLNSKIVDLAQHFSDFGTSFVSKIVHFFKTFTTSTALAFAWVLFHVLHGAYIVVESDIYFGKNIPRYASAVAQAFRSGAKVGLDSLRVTFIDGLSCFKIGRRRICLSGSKIYEVERGLLHSSQLPLDVYDLTMPSQVQKTKQKGIYLKGSGSDFSLADSVVEVVTTSLTPCGYSEPPKVADKICIVDNVYMAKAGDKYYPVVVDGHVGLLDQAWRVPCAGRCVTFKEQPTVNEIASTPKTIKVFYELDKDFNTILNTACGEFEVDDTVDMEEFYAVVIDAIEEKLSPCKELEGVGAKVSAFLQKLEDNSLFLFDEAGEEVLAPKLYCAFTAPEDDDFLEESGVEEDDVEGEETDLTVTSAGEPCVASEQEESSEILEDTLDDGPCVETSDSQVEEDVQMSDFGDLESVIQDYENVCFEFYTTEPEFVKVLDLYVPKATRNNCWLRSVLAVMQKLPCQFKDKNLQDLWVLYKQQYSQLFVDTLVNKIPANIVVPQGGYVADFAYWFLTLCDWQCVAYWKCIKCDLALKLKGLDAMFFYGDVVSHVCKCGESMVLIDVDVPFTAHFALKDKLFCAFITKRSVYKAACVVDVNDSHSMAVVDGKQIDDHRITSITSDKFDFIIGHGTSFSMTTFEIAQLYGSCITPNVCFVKGDIIKVSKRVKAEVVVNPANGHMAHGGGVAKAIAVAAGQQFVKETTDMVKSKGVCATGDCYVSTGGKLCKTVLNVVGPDARTQGKQSYALLERVYKHLNKYDCVVTTLISAGIFSVPSDVSLTYLLGTAKKQVVLVSNNQEDFDLISKCQITAVEGTKKLAERLSFNVGRSIVYETDANKLILSNDVAFVSTFNVLQDVLSLRHDIALDDDARTFVQSNVDVVPEGWRVVNKFYQINGVRPVKYFECPGGIDICSQDKVFGYVQQGSFNKATVAQIKALFLDKVDILLTVDGVNFTNRFVPVGESFGKSLGNVFCDGVNVTKHKCDINYKGKVFFQFDNLSSEDLKAVRSSFNFDQKELLAYYNMLVNCSKWQVVFNGKYFTFKQANNNCFVNVSCLMLQSLNLKFKIVQWQEAWLEFRSGRPARFVSLVLAKGGFKFGDPADSRDFLRVVFSQVDLTGAICDFEIACKCGVKQEQRTGVDAVMHFGTLSREDLEIGYTVDCSCGKKLIHCVRFDVPFLICSNTPASVKLPKGVGSANIFKGDKVGHYVHVKCEQSYQLYDASNVKKVTDVTGNLSDCLYLKNLKQTFKSVLTTYYLDDVKKIEYKPDLSQYYCDGGKYYTQRIIKAQFKTFEKVDGVYTNFKLIGHTVCDILNAKLGFDSSKEFVEYKVTEWPTATGDVVLATDDLYVKRYERGCITFGKPVIWLSHEQASLNSLTYFNRPLLVDENKFDVLKVDDVDDGGDISESDAKEPKEINIIKLSGVKKPFKVEDSVIVNDDTSEIKYVKSLSIVDVYDMWLTGCRCVVRTANALSRAVNVPTIRKFIKFGMTLVSIPIDLLNLREIKPVFNVVKAVRNKISACFNFIKWLFVLLFGWIKISADNKVIYTTEVASKLTCKLVALAFKNAFLTFKWSVVARGACIIATIFLLWFNFIYANVIFSDFYLPKIGFLPTFVGKIVQWIKNTFSLVTICDLYSIQDVGFKNQYCNGSIACQFCLAGFDMLDNYKAIDVVQYEADRRAFVDYTGVLKIVIELIVSYALYTAWFYPLFALISIQILTTWLPELLMLSTLHWSVRLLVSLANMLPAHVFMRFYIIIASFIKLFSLFRHVAYGCSKSGCLFCYKRNRSLRVKCSTIVGGMIRYYDVMANGGTGFCSKHQWNCIDCDSYKPGNTFITVEAALDLSKELKRPIQPTDVAYHTVTDVKQVGCYMRLFYDRDGQRTYDDVNASLFVDYSNLLHSKVKSVPNMHVVVVENDADKANFLNAAVFYAQSLFRPILMVDKILITTANTGTSVTETMFDVYVDTFLSMFDVDKKSLNALIATAHSSIKQGTQICKVLDTFLSCARKSCSIDSDVDTKCLADSVMSAVSAGLELTDESCNNLVPTYLKGDNIVAADLGVLIQNSAKHVQGNVAKIAGVSCIWSVDAFNQLSSDFQHKLKKACCKTGLKLELTYNKQMANVSVLTTPFSLKGGAVFSYFVYVCFVLSLVCFIGLWCLMPTYTVHKSDFQLPVYASYKVLDNGVIRDVSVEDVCFANKFEQFDQWYESTFGLSYYSNSMACPIVVAVVDQDFGSTVFNVPTKVLRYGYHVLHFITHALSADGVQCYTPHSQISYSNFYASGCVLSSACTMFAMADGSPQPYCYTDGLMQNASLYSSLVPHVRYNLANAKGFIRLPEVLREGLVRIVRTRSMSYCRVGLCEEADEGICFNFNGSWVLNNDYYRSLPGTFCGRDVFDLIYQLFKGLAQPVDFLALTASSIAGAILAVIVVLGFYYLIKLKRAFGDYTSIVFVNVIVWCVNFMMLFVFQVYPTLSCVYAICYFYATLYFPSEISVIMHLQWLVMYGTIMPLWFCLLYISVVVSNHAFWVFSYCRQLGTSVRSDGTFEEMALTTFMITKDSYCKLKNSLSDVAFNRYLSLYNKYRYYSGKMDTAAYREAACSQLAKAMDTFTNNNGSDVLYQPPTASVSTSFLQSGIVKMVNPTSKVEPCIVSVTYGNMTLNGLWLDDKVYCPRHVICSASDMTNPDYTNLLCRVTSSDFTVLFDRLSLTVMSYQMQGCMLVLTVTLQNSRTPKYTFGVVKPGETFTVLAAYNGKPQGAFHVTMRSSYTIKGSFLCGSCGSVGYVIMGDCVKFVYMHQLELSTGCHTGTDFNGDFYGPYKDAQVVQLPVQDYIQSVNFVAWLYAAILNNCNWFVQSDKCSVEDFNVWALSNGFSQVKSDLVIDALASMTGVSLETLLAAIKRLKNGFQGRQIMGSCSFEDELTPSDVYQQLAGIKLQSKRTRLVKGIVCWIMASTFLFSCIITAFVKWTMFMYVTTNMLSITFCALCVISLAMLLVKHKHLYLTMYIIPVLFTLLYNNYLVVYKQTFRGYVYAWLSYYVPSVEYTYTDEVIYGMLLLIGMVFVTLRSINHDLFSFIMFVGRVISVVSLWYMGSNLEEEILLMLASLFGTYTWTTALSMAAAKVIAKWVAVNVLYFTDIPQIKIVLVCYLFIGYIISCYWGLFSLMNSLFRMPLGVYNYKISVQELRYMNANGLRPPKNSFEALMLNFKLLGIGGVPIIEVSQFQSKLTDVKCANGGLLNCLQHLHVASNSKLWQYCSTLHNEILATSDLGVAFEKLAQLLIVLFANPAAVDSKCLTSIEEVCDDYAKDNTVLQALQSEFVNMASFVEYEVAKKNLDEACSSGSANQQQLKQLEKACNIAKSAYERDRAVARKLERMADLALTNMYKEARINDKKSKVVSALQTMLFSMVRKLDNQALNSILDNAVKGCVPLNAIPSLAANTLTIIVPDKSVYDQVVDNVYVTYAGNVWQIQTIQDSDGTNKQLHEISDDCNWPLVIIANRHNEVSATVLQNNELMPAKLKTQVVNSGPDQTCNTPTQCYYNNSYNGKIVYAILSDVDGLKYTKILKDDGNFVVLELDPPCKFTVQDVKGLKIKYLYFVKGCNTLARGWVVGTISSTVRLQAGTATEYASNSSILSLCAFSVDPKKTYLDFIQQGGTPIANCVKMLCDHAGTGMAITVKPDATTSQDSYGGASVCIYCRARVEHPDVDGLCKLRGKFVQVPVGIKDPVSYVLTHDVCQVCGFWRDGSCSCVSTDTTVQSKDTNFLNGFGVRV</sequence>
<feature type="chain" id="PRO_0000338170" description="Replicase polyprotein 1a">
    <location>
        <begin position="1"/>
        <end position="4383"/>
    </location>
</feature>
<feature type="chain" id="PRO_0000338171" description="Non-structural protein 1" evidence="1">
    <location>
        <begin position="1"/>
        <end position="246"/>
    </location>
</feature>
<feature type="chain" id="PRO_0000338172" description="Non-structural protein 2" evidence="1">
    <location>
        <begin position="247"/>
        <end position="851"/>
    </location>
</feature>
<feature type="chain" id="PRO_0000338173" description="Papain-like protease nsp3" evidence="1">
    <location>
        <begin position="852"/>
        <end position="2750"/>
    </location>
</feature>
<feature type="chain" id="PRO_0000338174" description="Non-structural protein 4" evidence="1">
    <location>
        <begin position="2751"/>
        <end position="3246"/>
    </location>
</feature>
<feature type="chain" id="PRO_0000338175" description="3C-like proteinase nsp5" evidence="1">
    <location>
        <begin position="3247"/>
        <end position="3549"/>
    </location>
</feature>
<feature type="chain" id="PRO_0000338176" description="Non-structural protein 6" evidence="1">
    <location>
        <begin position="3550"/>
        <end position="3836"/>
    </location>
</feature>
<feature type="chain" id="PRO_0000338177" description="Non-structural protein 7" evidence="1">
    <location>
        <begin position="3837"/>
        <end position="3925"/>
    </location>
</feature>
<feature type="chain" id="PRO_0000338178" description="Non-structural protein 8" evidence="1">
    <location>
        <begin position="3926"/>
        <end position="4122"/>
    </location>
</feature>
<feature type="chain" id="PRO_0000338179" description="RNA-capping enzyme subunit nsp9" evidence="1">
    <location>
        <begin position="4123"/>
        <end position="4232"/>
    </location>
</feature>
<feature type="chain" id="PRO_0000338180" description="Non-structural protein 10" evidence="1">
    <location>
        <begin position="4233"/>
        <end position="4369"/>
    </location>
</feature>
<feature type="chain" id="PRO_0000338181" description="Non-structural protein 11" evidence="3">
    <location>
        <begin position="4370"/>
        <end position="4383"/>
    </location>
</feature>
<feature type="transmembrane region" description="Helical" evidence="3">
    <location>
        <begin position="2138"/>
        <end position="2158"/>
    </location>
</feature>
<feature type="transmembrane region" description="Helical" evidence="3">
    <location>
        <begin position="2199"/>
        <end position="2219"/>
    </location>
</feature>
<feature type="transmembrane region" description="Helical" evidence="3">
    <location>
        <begin position="2221"/>
        <end position="2241"/>
    </location>
</feature>
<feature type="transmembrane region" description="Helical" evidence="3">
    <location>
        <begin position="2313"/>
        <end position="2333"/>
    </location>
</feature>
<feature type="transmembrane region" description="Helical" evidence="3">
    <location>
        <begin position="2343"/>
        <end position="2363"/>
    </location>
</feature>
<feature type="transmembrane region" description="Helical" evidence="3">
    <location>
        <begin position="2365"/>
        <end position="2385"/>
    </location>
</feature>
<feature type="transmembrane region" description="Helical" evidence="3">
    <location>
        <begin position="2752"/>
        <end position="2772"/>
    </location>
</feature>
<feature type="transmembrane region" description="Helical" evidence="3">
    <location>
        <begin position="2824"/>
        <end position="2844"/>
    </location>
</feature>
<feature type="transmembrane region" description="Helical" evidence="3">
    <location>
        <begin position="3009"/>
        <end position="3029"/>
    </location>
</feature>
<feature type="transmembrane region" description="Helical" evidence="3">
    <location>
        <begin position="3031"/>
        <end position="3051"/>
    </location>
</feature>
<feature type="transmembrane region" description="Helical" evidence="3">
    <location>
        <begin position="3063"/>
        <end position="3083"/>
    </location>
</feature>
<feature type="transmembrane region" description="Helical" evidence="3">
    <location>
        <begin position="3090"/>
        <end position="3110"/>
    </location>
</feature>
<feature type="transmembrane region" description="Helical" evidence="3">
    <location>
        <begin position="3115"/>
        <end position="3135"/>
    </location>
</feature>
<feature type="transmembrane region" description="Helical" evidence="3">
    <location>
        <begin position="3558"/>
        <end position="3578"/>
    </location>
</feature>
<feature type="transmembrane region" description="Helical" evidence="3">
    <location>
        <begin position="3588"/>
        <end position="3608"/>
    </location>
</feature>
<feature type="transmembrane region" description="Helical" evidence="3">
    <location>
        <begin position="3615"/>
        <end position="3635"/>
    </location>
</feature>
<feature type="transmembrane region" description="Helical" evidence="3">
    <location>
        <begin position="3657"/>
        <end position="3677"/>
    </location>
</feature>
<feature type="transmembrane region" description="Helical" evidence="3">
    <location>
        <begin position="3684"/>
        <end position="3704"/>
    </location>
</feature>
<feature type="transmembrane region" description="Helical" evidence="3">
    <location>
        <begin position="3711"/>
        <end position="3731"/>
    </location>
</feature>
<feature type="transmembrane region" description="Helical" evidence="3">
    <location>
        <begin position="3755"/>
        <end position="3775"/>
    </location>
</feature>
<feature type="domain" description="CoV Nsp1 globular" evidence="15">
    <location>
        <begin position="54"/>
        <end position="196"/>
    </location>
</feature>
<feature type="domain" description="BetaCoV Nsp1 C-terminal" evidence="16">
    <location>
        <begin position="216"/>
        <end position="246"/>
    </location>
</feature>
<feature type="domain" description="CoV Nsp2 N-terminal" evidence="17">
    <location>
        <begin position="250"/>
        <end position="519"/>
    </location>
</feature>
<feature type="domain" description="CoV Nsp2 middle" evidence="18">
    <location>
        <begin position="524"/>
        <end position="713"/>
    </location>
</feature>
<feature type="domain" description="CoV Nsp2 C-terminal" evidence="19">
    <location>
        <begin position="733"/>
        <end position="851"/>
    </location>
</feature>
<feature type="domain" description="Ubiquitin-like 1" evidence="4">
    <location>
        <begin position="853"/>
        <end position="966"/>
    </location>
</feature>
<feature type="domain" description="Peptidase C16 1" evidence="5">
    <location>
        <begin position="1036"/>
        <end position="1274"/>
    </location>
</feature>
<feature type="domain" description="Macro" evidence="6">
    <location>
        <begin position="1275"/>
        <end position="1435"/>
    </location>
</feature>
<feature type="domain" description="DPUP" evidence="8">
    <location>
        <begin position="1491"/>
        <end position="1563"/>
    </location>
</feature>
<feature type="domain" description="Ubiquitin-like 2" evidence="4">
    <location>
        <begin position="1562"/>
        <end position="1617"/>
    </location>
</feature>
<feature type="domain" description="Peptidase C16 2" evidence="5">
    <location>
        <begin position="1631"/>
        <end position="1892"/>
    </location>
</feature>
<feature type="domain" description="Nucleic acid-binding" evidence="9">
    <location>
        <begin position="1906"/>
        <end position="2007"/>
    </location>
</feature>
<feature type="domain" description="G2M" evidence="22">
    <location>
        <begin position="2020"/>
        <end position="2169"/>
    </location>
</feature>
<feature type="domain" description="3Ecto" evidence="21">
    <location>
        <begin position="2235"/>
        <end position="2296"/>
    </location>
</feature>
<feature type="domain" description="CoV Nsp3 Y" evidence="20">
    <location>
        <begin position="2383"/>
        <end position="2750"/>
    </location>
</feature>
<feature type="domain" description="Nsp4C" evidence="10">
    <location>
        <begin position="3149"/>
        <end position="3246"/>
    </location>
</feature>
<feature type="domain" description="Peptidase C30" evidence="7">
    <location>
        <begin position="3247"/>
        <end position="3549"/>
    </location>
</feature>
<feature type="domain" description="RdRp Nsp7 cofactor" evidence="11">
    <location>
        <begin position="3837"/>
        <end position="3925"/>
    </location>
</feature>
<feature type="domain" description="RdRp Nsp8 cofactor" evidence="12">
    <location>
        <begin position="3926"/>
        <end position="4122"/>
    </location>
</feature>
<feature type="domain" description="Nsp9 ssRNA-binding" evidence="13">
    <location>
        <begin position="4123"/>
        <end position="4232"/>
    </location>
</feature>
<feature type="domain" description="ExoN/MTase coactivator" evidence="14">
    <location>
        <begin position="4233"/>
        <end position="4370"/>
    </location>
</feature>
<feature type="zinc finger region" description="C4-type 1" evidence="5">
    <location>
        <begin position="1151"/>
        <end position="1179"/>
    </location>
</feature>
<feature type="zinc finger region" description="C4-type 2" evidence="5">
    <location>
        <begin position="1749"/>
        <end position="1785"/>
    </location>
</feature>
<feature type="zinc finger region" evidence="1">
    <location>
        <begin position="4306"/>
        <end position="4322"/>
    </location>
</feature>
<feature type="zinc finger region" evidence="1">
    <location>
        <begin position="4348"/>
        <end position="4361"/>
    </location>
</feature>
<feature type="region of interest" description="C4" evidence="17">
    <location>
        <begin position="392"/>
        <end position="416"/>
    </location>
</feature>
<feature type="region of interest" description="Disordered" evidence="23">
    <location>
        <begin position="972"/>
        <end position="1000"/>
    </location>
</feature>
<feature type="region of interest" description="HD1">
    <location>
        <begin position="2138"/>
        <end position="2385"/>
    </location>
</feature>
<feature type="region of interest" description="Y1" evidence="20">
    <location>
        <begin position="2383"/>
        <end position="2473"/>
    </location>
</feature>
<feature type="region of interest" description="ZF1" evidence="20">
    <location>
        <begin position="2387"/>
        <end position="2400"/>
    </location>
</feature>
<feature type="region of interest" description="ZF2" evidence="20">
    <location>
        <begin position="2433"/>
        <end position="2443"/>
    </location>
</feature>
<feature type="region of interest" description="CoV-Y" evidence="20">
    <location>
        <begin position="2474"/>
        <end position="2750"/>
    </location>
</feature>
<feature type="region of interest" description="Y2" evidence="20">
    <location>
        <begin position="2474"/>
        <end position="2566"/>
    </location>
</feature>
<feature type="region of interest" description="Y3" evidence="20">
    <location>
        <begin position="2567"/>
        <end position="2649"/>
    </location>
</feature>
<feature type="region of interest" description="Y4" evidence="20">
    <location>
        <begin position="2650"/>
        <end position="2750"/>
    </location>
</feature>
<feature type="region of interest" description="HD2">
    <location>
        <begin position="2752"/>
        <end position="3135"/>
    </location>
</feature>
<feature type="region of interest" description="HD3">
    <location>
        <begin position="3319"/>
        <end position="3775"/>
    </location>
</feature>
<feature type="compositionally biased region" description="Acidic residues" evidence="23">
    <location>
        <begin position="972"/>
        <end position="986"/>
    </location>
</feature>
<feature type="active site" description="For PL1-PRO activity" evidence="5">
    <location>
        <position position="1074"/>
    </location>
</feature>
<feature type="active site" description="For PL1-PRO activity" evidence="5">
    <location>
        <position position="1225"/>
    </location>
</feature>
<feature type="active site" description="For PL1-PRO activity" evidence="5">
    <location>
        <position position="1236"/>
    </location>
</feature>
<feature type="active site" description="For PL2-PRO activity" evidence="5">
    <location>
        <position position="1671"/>
    </location>
</feature>
<feature type="active site" description="For PL2-PRO activity" evidence="5">
    <location>
        <position position="1828"/>
    </location>
</feature>
<feature type="active site" description="For PL2-PRO activity" evidence="5">
    <location>
        <position position="1842"/>
    </location>
</feature>
<feature type="active site" description="For 3CL-PRO activity" evidence="7">
    <location>
        <position position="3287"/>
    </location>
</feature>
<feature type="active site" description="For 3CL-PRO activity" evidence="7">
    <location>
        <position position="3391"/>
    </location>
</feature>
<feature type="binding site" evidence="17">
    <location>
        <position position="392"/>
    </location>
    <ligand>
        <name>Zn(2+)</name>
        <dbReference type="ChEBI" id="CHEBI:29105"/>
        <label>1</label>
    </ligand>
</feature>
<feature type="binding site" evidence="17">
    <location>
        <position position="397"/>
    </location>
    <ligand>
        <name>Zn(2+)</name>
        <dbReference type="ChEBI" id="CHEBI:29105"/>
        <label>1</label>
    </ligand>
</feature>
<feature type="binding site" evidence="17">
    <location>
        <position position="413"/>
    </location>
    <ligand>
        <name>Zn(2+)</name>
        <dbReference type="ChEBI" id="CHEBI:29105"/>
        <label>1</label>
    </ligand>
</feature>
<feature type="binding site" evidence="17">
    <location>
        <position position="416"/>
    </location>
    <ligand>
        <name>Zn(2+)</name>
        <dbReference type="ChEBI" id="CHEBI:29105"/>
        <label>1</label>
    </ligand>
</feature>
<feature type="binding site" evidence="5">
    <location>
        <position position="1151"/>
    </location>
    <ligand>
        <name>Zn(2+)</name>
        <dbReference type="ChEBI" id="CHEBI:29105"/>
        <label>2</label>
    </ligand>
</feature>
<feature type="binding site" evidence="5">
    <location>
        <position position="1154"/>
    </location>
    <ligand>
        <name>Zn(2+)</name>
        <dbReference type="ChEBI" id="CHEBI:29105"/>
        <label>2</label>
    </ligand>
</feature>
<feature type="binding site" evidence="5">
    <location>
        <position position="1177"/>
    </location>
    <ligand>
        <name>Zn(2+)</name>
        <dbReference type="ChEBI" id="CHEBI:29105"/>
        <label>2</label>
    </ligand>
</feature>
<feature type="binding site" evidence="5">
    <location>
        <position position="1179"/>
    </location>
    <ligand>
        <name>Zn(2+)</name>
        <dbReference type="ChEBI" id="CHEBI:29105"/>
        <label>2</label>
    </ligand>
</feature>
<feature type="binding site" evidence="5">
    <location>
        <position position="1749"/>
    </location>
    <ligand>
        <name>Zn(2+)</name>
        <dbReference type="ChEBI" id="CHEBI:29105"/>
        <label>3</label>
    </ligand>
</feature>
<feature type="binding site" evidence="5">
    <location>
        <position position="1751"/>
    </location>
    <ligand>
        <name>Zn(2+)</name>
        <dbReference type="ChEBI" id="CHEBI:29105"/>
        <label>3</label>
    </ligand>
</feature>
<feature type="binding site" evidence="5">
    <location>
        <position position="1783"/>
    </location>
    <ligand>
        <name>Zn(2+)</name>
        <dbReference type="ChEBI" id="CHEBI:29105"/>
        <label>3</label>
    </ligand>
</feature>
<feature type="binding site" evidence="5">
    <location>
        <position position="1785"/>
    </location>
    <ligand>
        <name>Zn(2+)</name>
        <dbReference type="ChEBI" id="CHEBI:29105"/>
        <label>3</label>
    </ligand>
</feature>
<feature type="binding site" evidence="20">
    <location>
        <position position="2387"/>
    </location>
    <ligand>
        <name>Zn(2+)</name>
        <dbReference type="ChEBI" id="CHEBI:29105"/>
        <label>4</label>
    </ligand>
</feature>
<feature type="binding site" evidence="20">
    <location>
        <position position="2392"/>
    </location>
    <ligand>
        <name>Zn(2+)</name>
        <dbReference type="ChEBI" id="CHEBI:29105"/>
        <label>4</label>
    </ligand>
</feature>
<feature type="binding site" evidence="20">
    <location>
        <position position="2397"/>
    </location>
    <ligand>
        <name>Zn(2+)</name>
        <dbReference type="ChEBI" id="CHEBI:29105"/>
        <label>4</label>
    </ligand>
</feature>
<feature type="binding site" evidence="20">
    <location>
        <position position="2400"/>
    </location>
    <ligand>
        <name>Zn(2+)</name>
        <dbReference type="ChEBI" id="CHEBI:29105"/>
        <label>4</label>
    </ligand>
</feature>
<feature type="binding site" evidence="20">
    <location>
        <position position="2433"/>
    </location>
    <ligand>
        <name>Zn(2+)</name>
        <dbReference type="ChEBI" id="CHEBI:29105"/>
        <label>5</label>
    </ligand>
</feature>
<feature type="binding site" evidence="20">
    <location>
        <position position="2436"/>
    </location>
    <ligand>
        <name>Zn(2+)</name>
        <dbReference type="ChEBI" id="CHEBI:29105"/>
        <label>5</label>
    </ligand>
</feature>
<feature type="binding site" evidence="20">
    <location>
        <position position="2440"/>
    </location>
    <ligand>
        <name>Zn(2+)</name>
        <dbReference type="ChEBI" id="CHEBI:29105"/>
        <label>5</label>
    </ligand>
</feature>
<feature type="binding site" evidence="20">
    <location>
        <position position="2443"/>
    </location>
    <ligand>
        <name>Zn(2+)</name>
        <dbReference type="ChEBI" id="CHEBI:29105"/>
        <label>5</label>
    </ligand>
</feature>
<feature type="binding site" evidence="14">
    <location>
        <position position="4306"/>
    </location>
    <ligand>
        <name>Zn(2+)</name>
        <dbReference type="ChEBI" id="CHEBI:29105"/>
        <label>6</label>
    </ligand>
</feature>
<feature type="binding site" evidence="14">
    <location>
        <position position="4309"/>
    </location>
    <ligand>
        <name>Zn(2+)</name>
        <dbReference type="ChEBI" id="CHEBI:29105"/>
        <label>6</label>
    </ligand>
</feature>
<feature type="binding site" evidence="14">
    <location>
        <position position="4315"/>
    </location>
    <ligand>
        <name>Zn(2+)</name>
        <dbReference type="ChEBI" id="CHEBI:29105"/>
        <label>6</label>
    </ligand>
</feature>
<feature type="binding site" evidence="14">
    <location>
        <position position="4322"/>
    </location>
    <ligand>
        <name>Zn(2+)</name>
        <dbReference type="ChEBI" id="CHEBI:29105"/>
        <label>6</label>
    </ligand>
</feature>
<feature type="binding site" evidence="14">
    <location>
        <position position="4348"/>
    </location>
    <ligand>
        <name>Zn(2+)</name>
        <dbReference type="ChEBI" id="CHEBI:29105"/>
        <label>7</label>
    </ligand>
</feature>
<feature type="binding site" evidence="14">
    <location>
        <position position="4351"/>
    </location>
    <ligand>
        <name>Zn(2+)</name>
        <dbReference type="ChEBI" id="CHEBI:29105"/>
        <label>7</label>
    </ligand>
</feature>
<feature type="binding site" evidence="14">
    <location>
        <position position="4359"/>
    </location>
    <ligand>
        <name>Zn(2+)</name>
        <dbReference type="ChEBI" id="CHEBI:29105"/>
        <label>7</label>
    </ligand>
</feature>
<feature type="binding site" evidence="14">
    <location>
        <position position="4361"/>
    </location>
    <ligand>
        <name>Zn(2+)</name>
        <dbReference type="ChEBI" id="CHEBI:29105"/>
        <label>7</label>
    </ligand>
</feature>
<feature type="site" description="Cleavage; by PL1-PRO" evidence="1">
    <location>
        <begin position="246"/>
        <end position="247"/>
    </location>
</feature>
<feature type="site" description="Cleavage; by PL1-PRO" evidence="1">
    <location>
        <begin position="851"/>
        <end position="852"/>
    </location>
</feature>
<feature type="site" description="Cleavage; by PL2-PRO" evidence="1">
    <location>
        <begin position="2750"/>
        <end position="2751"/>
    </location>
</feature>
<feature type="site" description="Cleavage; by 3CL-PRO" evidence="1">
    <location>
        <begin position="3246"/>
        <end position="3247"/>
    </location>
</feature>
<feature type="site" description="Cleavage; by 3CL-PRO" evidence="1">
    <location>
        <begin position="3549"/>
        <end position="3550"/>
    </location>
</feature>
<feature type="site" description="Cleavage; by 3CL-PRO" evidence="1">
    <location>
        <begin position="3836"/>
        <end position="3837"/>
    </location>
</feature>
<feature type="site" description="Cleavage; by 3CL-PRO" evidence="1">
    <location>
        <begin position="3925"/>
        <end position="3926"/>
    </location>
</feature>
<feature type="site" description="Cleavage; by 3CL-PRO" evidence="1">
    <location>
        <begin position="4122"/>
        <end position="4123"/>
    </location>
</feature>
<feature type="site" description="Cleavage; by 3CL-PRO" evidence="1">
    <location>
        <begin position="4232"/>
        <end position="4233"/>
    </location>
</feature>
<feature type="site" description="Cleavage; by 3CL-PRO" evidence="1">
    <location>
        <begin position="4369"/>
        <end position="4370"/>
    </location>
</feature>
<feature type="disulfide bond" evidence="21">
    <location>
        <begin position="2251"/>
        <end position="2275"/>
    </location>
</feature>
<feature type="disulfide bond" evidence="21">
    <location>
        <begin position="2266"/>
        <end position="2272"/>
    </location>
</feature>
<dbReference type="EC" id="3.4.19.12"/>
<dbReference type="EC" id="3.4.22.-"/>
<dbReference type="EC" id="3.4.22.69"/>
<dbReference type="EC" id="2.7.7.50"/>
<dbReference type="EMBL" id="AF220295">
    <property type="protein sequence ID" value="AAL40396.1"/>
    <property type="molecule type" value="Genomic_RNA"/>
</dbReference>
<dbReference type="SMR" id="P0C6U1"/>
<dbReference type="Proteomes" id="UP000008572">
    <property type="component" value="Genome"/>
</dbReference>
<dbReference type="GO" id="GO:0033644">
    <property type="term" value="C:host cell membrane"/>
    <property type="evidence" value="ECO:0007669"/>
    <property type="project" value="UniProtKB-SubCell"/>
</dbReference>
<dbReference type="GO" id="GO:0044220">
    <property type="term" value="C:host cell perinuclear region of cytoplasm"/>
    <property type="evidence" value="ECO:0007669"/>
    <property type="project" value="UniProtKB-SubCell"/>
</dbReference>
<dbReference type="GO" id="GO:0016020">
    <property type="term" value="C:membrane"/>
    <property type="evidence" value="ECO:0007669"/>
    <property type="project" value="UniProtKB-KW"/>
</dbReference>
<dbReference type="GO" id="GO:0004843">
    <property type="term" value="F:cysteine-type deubiquitinase activity"/>
    <property type="evidence" value="ECO:0007669"/>
    <property type="project" value="UniProtKB-EC"/>
</dbReference>
<dbReference type="GO" id="GO:0004197">
    <property type="term" value="F:cysteine-type endopeptidase activity"/>
    <property type="evidence" value="ECO:0007669"/>
    <property type="project" value="InterPro"/>
</dbReference>
<dbReference type="GO" id="GO:0004519">
    <property type="term" value="F:endonuclease activity"/>
    <property type="evidence" value="ECO:0007669"/>
    <property type="project" value="UniProtKB-KW"/>
</dbReference>
<dbReference type="GO" id="GO:0008168">
    <property type="term" value="F:methyltransferase activity"/>
    <property type="evidence" value="ECO:0007669"/>
    <property type="project" value="UniProtKB-KW"/>
</dbReference>
<dbReference type="GO" id="GO:0008242">
    <property type="term" value="F:omega peptidase activity"/>
    <property type="evidence" value="ECO:0007669"/>
    <property type="project" value="InterPro"/>
</dbReference>
<dbReference type="GO" id="GO:0003968">
    <property type="term" value="F:RNA-directed RNA polymerase activity"/>
    <property type="evidence" value="ECO:0007669"/>
    <property type="project" value="InterPro"/>
</dbReference>
<dbReference type="GO" id="GO:0003727">
    <property type="term" value="F:single-stranded RNA binding"/>
    <property type="evidence" value="ECO:0007669"/>
    <property type="project" value="InterPro"/>
</dbReference>
<dbReference type="GO" id="GO:0008270">
    <property type="term" value="F:zinc ion binding"/>
    <property type="evidence" value="ECO:0007669"/>
    <property type="project" value="UniProtKB-KW"/>
</dbReference>
<dbReference type="GO" id="GO:0032259">
    <property type="term" value="P:methylation"/>
    <property type="evidence" value="ECO:0007669"/>
    <property type="project" value="UniProtKB-KW"/>
</dbReference>
<dbReference type="GO" id="GO:0006508">
    <property type="term" value="P:proteolysis"/>
    <property type="evidence" value="ECO:0007669"/>
    <property type="project" value="UniProtKB-KW"/>
</dbReference>
<dbReference type="GO" id="GO:0010506">
    <property type="term" value="P:regulation of autophagy"/>
    <property type="evidence" value="ECO:0007669"/>
    <property type="project" value="InterPro"/>
</dbReference>
<dbReference type="GO" id="GO:0039520">
    <property type="term" value="P:symbiont-mediated activation of host autophagy"/>
    <property type="evidence" value="ECO:0007669"/>
    <property type="project" value="UniProtKB-KW"/>
</dbReference>
<dbReference type="GO" id="GO:0039595">
    <property type="term" value="P:symbiont-mediated degradation of host mRNA"/>
    <property type="evidence" value="ECO:0007669"/>
    <property type="project" value="UniProtKB-KW"/>
</dbReference>
<dbReference type="GO" id="GO:0039648">
    <property type="term" value="P:symbiont-mediated perturbation of host ubiquitin-like protein modification"/>
    <property type="evidence" value="ECO:0007669"/>
    <property type="project" value="UniProtKB-KW"/>
</dbReference>
<dbReference type="GO" id="GO:0039548">
    <property type="term" value="P:symbiont-mediated suppression of host cytoplasmic pattern recognition receptor signaling pathway via inhibition of IRF3 activity"/>
    <property type="evidence" value="ECO:0007669"/>
    <property type="project" value="UniProtKB-KW"/>
</dbReference>
<dbReference type="GO" id="GO:0039657">
    <property type="term" value="P:symbiont-mediated suppression of host gene expression"/>
    <property type="evidence" value="ECO:0007669"/>
    <property type="project" value="UniProtKB-KW"/>
</dbReference>
<dbReference type="GO" id="GO:0039579">
    <property type="term" value="P:symbiont-mediated suppression of host ISG15-protein conjugation"/>
    <property type="evidence" value="ECO:0007669"/>
    <property type="project" value="UniProtKB-KW"/>
</dbReference>
<dbReference type="GO" id="GO:0039502">
    <property type="term" value="P:symbiont-mediated suppression of host type I interferon-mediated signaling pathway"/>
    <property type="evidence" value="ECO:0007669"/>
    <property type="project" value="UniProtKB-KW"/>
</dbReference>
<dbReference type="GO" id="GO:0019079">
    <property type="term" value="P:viral genome replication"/>
    <property type="evidence" value="ECO:0007669"/>
    <property type="project" value="InterPro"/>
</dbReference>
<dbReference type="GO" id="GO:0019082">
    <property type="term" value="P:viral protein processing"/>
    <property type="evidence" value="ECO:0007669"/>
    <property type="project" value="InterPro"/>
</dbReference>
<dbReference type="GO" id="GO:0075523">
    <property type="term" value="P:viral translational frameshifting"/>
    <property type="evidence" value="ECO:0007669"/>
    <property type="project" value="UniProtKB-KW"/>
</dbReference>
<dbReference type="CDD" id="cd21901">
    <property type="entry name" value="alpha_betaCoV_Nsp10"/>
    <property type="match status" value="1"/>
</dbReference>
<dbReference type="CDD" id="cd21560">
    <property type="entry name" value="betaCoV-Nsp6"/>
    <property type="match status" value="1"/>
</dbReference>
<dbReference type="CDD" id="cd21519">
    <property type="entry name" value="betaCoV_Nsp2_MHV-like"/>
    <property type="match status" value="1"/>
</dbReference>
<dbReference type="CDD" id="cd21666">
    <property type="entry name" value="betaCoV_Nsp5_Mpro"/>
    <property type="match status" value="1"/>
</dbReference>
<dbReference type="CDD" id="cd21827">
    <property type="entry name" value="betaCoV_Nsp7"/>
    <property type="match status" value="1"/>
</dbReference>
<dbReference type="CDD" id="cd21831">
    <property type="entry name" value="betaCoV_Nsp8"/>
    <property type="match status" value="1"/>
</dbReference>
<dbReference type="CDD" id="cd21898">
    <property type="entry name" value="betaCoV_Nsp9"/>
    <property type="match status" value="1"/>
</dbReference>
<dbReference type="CDD" id="cd21732">
    <property type="entry name" value="betaCoV_PLPro"/>
    <property type="match status" value="1"/>
</dbReference>
<dbReference type="CDD" id="cd21473">
    <property type="entry name" value="cv_Nsp4_TM"/>
    <property type="match status" value="1"/>
</dbReference>
<dbReference type="CDD" id="cd21524">
    <property type="entry name" value="DPUP_MHV_Nsp3"/>
    <property type="match status" value="1"/>
</dbReference>
<dbReference type="CDD" id="cd21557">
    <property type="entry name" value="Macro_X_Nsp3-like"/>
    <property type="match status" value="1"/>
</dbReference>
<dbReference type="CDD" id="cd21879">
    <property type="entry name" value="MHV-like_Nsp1"/>
    <property type="match status" value="1"/>
</dbReference>
<dbReference type="CDD" id="cd21812">
    <property type="entry name" value="MHV-like_Nsp3_betaSM"/>
    <property type="match status" value="1"/>
</dbReference>
<dbReference type="CDD" id="cd21824">
    <property type="entry name" value="MHV-like_Nsp3_NAB"/>
    <property type="match status" value="1"/>
</dbReference>
<dbReference type="CDD" id="cd21714">
    <property type="entry name" value="TM_Y_MHV-like_Nsp3_C"/>
    <property type="match status" value="1"/>
</dbReference>
<dbReference type="CDD" id="cd21467">
    <property type="entry name" value="Ubl1_cv_Nsp3_N-like"/>
    <property type="match status" value="1"/>
</dbReference>
<dbReference type="FunFam" id="1.10.150.420:FF:000001">
    <property type="entry name" value="Replicase polyprotein"/>
    <property type="match status" value="1"/>
</dbReference>
<dbReference type="Gene3D" id="1.10.8.1190">
    <property type="match status" value="2"/>
</dbReference>
<dbReference type="Gene3D" id="2.60.120.1680">
    <property type="match status" value="1"/>
</dbReference>
<dbReference type="Gene3D" id="3.10.20.350">
    <property type="match status" value="1"/>
</dbReference>
<dbReference type="Gene3D" id="3.10.20.540">
    <property type="match status" value="1"/>
</dbReference>
<dbReference type="Gene3D" id="6.10.140.2090">
    <property type="match status" value="1"/>
</dbReference>
<dbReference type="Gene3D" id="1.10.150.420">
    <property type="entry name" value="Coronavirus nonstructural protein 4 C-terminus"/>
    <property type="match status" value="1"/>
</dbReference>
<dbReference type="Gene3D" id="3.40.220.10">
    <property type="entry name" value="Leucine Aminopeptidase, subunit E, domain 1"/>
    <property type="match status" value="1"/>
</dbReference>
<dbReference type="Gene3D" id="1.10.1840.10">
    <property type="entry name" value="main proteinase (3clpro) structure, domain 3"/>
    <property type="match status" value="1"/>
</dbReference>
<dbReference type="Gene3D" id="1.10.8.370">
    <property type="entry name" value="nsp7 replicase"/>
    <property type="match status" value="1"/>
</dbReference>
<dbReference type="Gene3D" id="3.30.70.3540">
    <property type="entry name" value="Nsp8 replicase, head domain"/>
    <property type="match status" value="1"/>
</dbReference>
<dbReference type="Gene3D" id="2.40.10.250">
    <property type="entry name" value="Replicase NSP9"/>
    <property type="match status" value="1"/>
</dbReference>
<dbReference type="Gene3D" id="3.40.50.11020">
    <property type="entry name" value="Replicase polyprotein, nucleic acid-binding domain"/>
    <property type="match status" value="1"/>
</dbReference>
<dbReference type="Gene3D" id="2.40.10.10">
    <property type="entry name" value="Trypsin-like serine proteases"/>
    <property type="match status" value="2"/>
</dbReference>
<dbReference type="InterPro" id="IPR046443">
    <property type="entry name" value="a/bCoV_NSP1_glob"/>
</dbReference>
<dbReference type="InterPro" id="IPR022570">
    <property type="entry name" value="B-CoV_A_NSP1"/>
</dbReference>
<dbReference type="InterPro" id="IPR046442">
    <property type="entry name" value="bCoV_NSP1_C"/>
</dbReference>
<dbReference type="InterPro" id="IPR043613">
    <property type="entry name" value="CoV_NSP2_C"/>
</dbReference>
<dbReference type="InterPro" id="IPR047573">
    <property type="entry name" value="CoV_NSP2_M"/>
</dbReference>
<dbReference type="InterPro" id="IPR049894">
    <property type="entry name" value="COV_NSP3_3ECTO"/>
</dbReference>
<dbReference type="InterPro" id="IPR043611">
    <property type="entry name" value="CoV_NSP3_C"/>
</dbReference>
<dbReference type="InterPro" id="IPR047566">
    <property type="entry name" value="CoV_NSP3_Y"/>
</dbReference>
<dbReference type="InterPro" id="IPR032505">
    <property type="entry name" value="CoV_NSP4_C"/>
</dbReference>
<dbReference type="InterPro" id="IPR043612">
    <property type="entry name" value="CoV_NSP4_N"/>
</dbReference>
<dbReference type="InterPro" id="IPR022733">
    <property type="entry name" value="DPUP_SUD_C_bCoV"/>
</dbReference>
<dbReference type="InterPro" id="IPR002589">
    <property type="entry name" value="Macro_dom"/>
</dbReference>
<dbReference type="InterPro" id="IPR043472">
    <property type="entry name" value="Macro_dom-like"/>
</dbReference>
<dbReference type="InterPro" id="IPR044371">
    <property type="entry name" value="Macro_X_NSP3-like"/>
</dbReference>
<dbReference type="InterPro" id="IPR036333">
    <property type="entry name" value="NSP10_sf_CoV"/>
</dbReference>
<dbReference type="InterPro" id="IPR044384">
    <property type="entry name" value="NSP2_MHV-like"/>
</dbReference>
<dbReference type="InterPro" id="IPR043615">
    <property type="entry name" value="NSP2_N_CoV"/>
</dbReference>
<dbReference type="InterPro" id="IPR044381">
    <property type="entry name" value="NSP3_DPUP_MHV"/>
</dbReference>
<dbReference type="InterPro" id="IPR047567">
    <property type="entry name" value="NSP3_G2M_bCoV"/>
</dbReference>
<dbReference type="InterPro" id="IPR032592">
    <property type="entry name" value="NSP3_NAB_bCoV"/>
</dbReference>
<dbReference type="InterPro" id="IPR042570">
    <property type="entry name" value="NSP3_NAB_bCoV_sf"/>
</dbReference>
<dbReference type="InterPro" id="IPR044357">
    <property type="entry name" value="NSP3_Ubl1_dom_CoV"/>
</dbReference>
<dbReference type="InterPro" id="IPR044353">
    <property type="entry name" value="Nsp3_Ubl2_dom_CoV"/>
</dbReference>
<dbReference type="InterPro" id="IPR038083">
    <property type="entry name" value="NSP3A-like"/>
</dbReference>
<dbReference type="InterPro" id="IPR038123">
    <property type="entry name" value="NSP4_C_sf_CoV"/>
</dbReference>
<dbReference type="InterPro" id="IPR044367">
    <property type="entry name" value="NSP6_betaCoV"/>
</dbReference>
<dbReference type="InterPro" id="IPR043610">
    <property type="entry name" value="NSP6_CoV"/>
</dbReference>
<dbReference type="InterPro" id="IPR014828">
    <property type="entry name" value="NSP7_CoV"/>
</dbReference>
<dbReference type="InterPro" id="IPR037204">
    <property type="entry name" value="NSP7_sf_CoV"/>
</dbReference>
<dbReference type="InterPro" id="IPR014829">
    <property type="entry name" value="NSP8_CoV"/>
</dbReference>
<dbReference type="InterPro" id="IPR037230">
    <property type="entry name" value="NSP8_sf_CoV"/>
</dbReference>
<dbReference type="InterPro" id="IPR014822">
    <property type="entry name" value="NSP9_CoV"/>
</dbReference>
<dbReference type="InterPro" id="IPR036499">
    <property type="entry name" value="NSP9_sf_CoV"/>
</dbReference>
<dbReference type="InterPro" id="IPR002705">
    <property type="entry name" value="Pept_C30/C16_B_coronavir"/>
</dbReference>
<dbReference type="InterPro" id="IPR013016">
    <property type="entry name" value="Peptidase_C16_CoV"/>
</dbReference>
<dbReference type="InterPro" id="IPR008740">
    <property type="entry name" value="Peptidase_C30_CoV"/>
</dbReference>
<dbReference type="InterPro" id="IPR043477">
    <property type="entry name" value="Peptidase_C30_dom3_CoV"/>
</dbReference>
<dbReference type="InterPro" id="IPR009003">
    <property type="entry name" value="Peptidase_S1_PA"/>
</dbReference>
<dbReference type="InterPro" id="IPR043504">
    <property type="entry name" value="Peptidase_S1_PA_chymotrypsin"/>
</dbReference>
<dbReference type="InterPro" id="IPR043177">
    <property type="entry name" value="PLpro_N_sf_CoV"/>
</dbReference>
<dbReference type="InterPro" id="IPR043503">
    <property type="entry name" value="PLpro_palm_finger_dom_CoV"/>
</dbReference>
<dbReference type="InterPro" id="IPR043178">
    <property type="entry name" value="PLpro_thumb_sf_CoV"/>
</dbReference>
<dbReference type="InterPro" id="IPR018995">
    <property type="entry name" value="RNA_synth_NSP10_CoV"/>
</dbReference>
<dbReference type="Pfam" id="PF11963">
    <property type="entry name" value="B-CoV_A_NSP1"/>
    <property type="match status" value="1"/>
</dbReference>
<dbReference type="Pfam" id="PF16251">
    <property type="entry name" value="bCoV_NAB"/>
    <property type="match status" value="1"/>
</dbReference>
<dbReference type="Pfam" id="PF09401">
    <property type="entry name" value="CoV_NSP10"/>
    <property type="match status" value="1"/>
</dbReference>
<dbReference type="Pfam" id="PF19218">
    <property type="entry name" value="CoV_NSP3_C"/>
    <property type="match status" value="1"/>
</dbReference>
<dbReference type="Pfam" id="PF16348">
    <property type="entry name" value="CoV_NSP4_C"/>
    <property type="match status" value="1"/>
</dbReference>
<dbReference type="Pfam" id="PF19217">
    <property type="entry name" value="CoV_NSP4_N"/>
    <property type="match status" value="1"/>
</dbReference>
<dbReference type="Pfam" id="PF19213">
    <property type="entry name" value="CoV_NSP6"/>
    <property type="match status" value="1"/>
</dbReference>
<dbReference type="Pfam" id="PF08716">
    <property type="entry name" value="CoV_NSP7"/>
    <property type="match status" value="1"/>
</dbReference>
<dbReference type="Pfam" id="PF08717">
    <property type="entry name" value="CoV_NSP8"/>
    <property type="match status" value="1"/>
</dbReference>
<dbReference type="Pfam" id="PF08710">
    <property type="entry name" value="CoV_NSP9"/>
    <property type="match status" value="1"/>
</dbReference>
<dbReference type="Pfam" id="PF08715">
    <property type="entry name" value="CoV_peptidase"/>
    <property type="match status" value="1"/>
</dbReference>
<dbReference type="Pfam" id="PF01661">
    <property type="entry name" value="Macro"/>
    <property type="match status" value="1"/>
</dbReference>
<dbReference type="Pfam" id="PF22104">
    <property type="entry name" value="MHV_Nsp3_DPUP"/>
    <property type="match status" value="1"/>
</dbReference>
<dbReference type="Pfam" id="PF01831">
    <property type="entry name" value="Peptidase_C16"/>
    <property type="match status" value="1"/>
</dbReference>
<dbReference type="Pfam" id="PF05409">
    <property type="entry name" value="Peptidase_C30"/>
    <property type="match status" value="1"/>
</dbReference>
<dbReference type="SMART" id="SM00506">
    <property type="entry name" value="A1pp"/>
    <property type="match status" value="1"/>
</dbReference>
<dbReference type="SUPFAM" id="SSF144246">
    <property type="entry name" value="Coronavirus NSP10-like"/>
    <property type="match status" value="1"/>
</dbReference>
<dbReference type="SUPFAM" id="SSF140367">
    <property type="entry name" value="Coronavirus NSP7-like"/>
    <property type="match status" value="1"/>
</dbReference>
<dbReference type="SUPFAM" id="SSF143076">
    <property type="entry name" value="Coronavirus NSP8-like"/>
    <property type="match status" value="1"/>
</dbReference>
<dbReference type="SUPFAM" id="SSF52949">
    <property type="entry name" value="Macro domain-like"/>
    <property type="match status" value="1"/>
</dbReference>
<dbReference type="SUPFAM" id="SSF159936">
    <property type="entry name" value="NSP3A-like"/>
    <property type="match status" value="1"/>
</dbReference>
<dbReference type="SUPFAM" id="SSF101816">
    <property type="entry name" value="Replicase NSP9"/>
    <property type="match status" value="1"/>
</dbReference>
<dbReference type="SUPFAM" id="SSF50494">
    <property type="entry name" value="Trypsin-like serine proteases"/>
    <property type="match status" value="1"/>
</dbReference>
<dbReference type="PROSITE" id="PS51963">
    <property type="entry name" value="BCOV_NSP1_C"/>
    <property type="match status" value="1"/>
</dbReference>
<dbReference type="PROSITE" id="PS51942">
    <property type="entry name" value="BCOV_NSP3C_C"/>
    <property type="match status" value="1"/>
</dbReference>
<dbReference type="PROSITE" id="PS51994">
    <property type="entry name" value="BCOV_NSP3E_G2M"/>
    <property type="match status" value="1"/>
</dbReference>
<dbReference type="PROSITE" id="PS51945">
    <property type="entry name" value="BCOV_NSP3E_NAB"/>
    <property type="match status" value="1"/>
</dbReference>
<dbReference type="PROSITE" id="PS51993">
    <property type="entry name" value="COV_3ECTO"/>
    <property type="match status" value="1"/>
</dbReference>
<dbReference type="PROSITE" id="PS51952">
    <property type="entry name" value="COV_EXON_MTASE_COACT"/>
    <property type="match status" value="1"/>
</dbReference>
<dbReference type="PROSITE" id="PS51962">
    <property type="entry name" value="COV_NSP1"/>
    <property type="match status" value="1"/>
</dbReference>
<dbReference type="PROSITE" id="PS51991">
    <property type="entry name" value="COV_NSP2_C"/>
    <property type="match status" value="1"/>
</dbReference>
<dbReference type="PROSITE" id="PS51990">
    <property type="entry name" value="COV_NSP2_M"/>
    <property type="match status" value="1"/>
</dbReference>
<dbReference type="PROSITE" id="PS51989">
    <property type="entry name" value="COV_NSP2_N"/>
    <property type="match status" value="1"/>
</dbReference>
<dbReference type="PROSITE" id="PS51992">
    <property type="entry name" value="COV_NSP3_Y"/>
    <property type="match status" value="1"/>
</dbReference>
<dbReference type="PROSITE" id="PS51943">
    <property type="entry name" value="COV_NSP3A_UBL"/>
    <property type="match status" value="1"/>
</dbReference>
<dbReference type="PROSITE" id="PS51944">
    <property type="entry name" value="COV_NSP3D_UBL"/>
    <property type="match status" value="1"/>
</dbReference>
<dbReference type="PROSITE" id="PS51946">
    <property type="entry name" value="COV_NSP4C"/>
    <property type="match status" value="1"/>
</dbReference>
<dbReference type="PROSITE" id="PS51949">
    <property type="entry name" value="COV_NSP7"/>
    <property type="match status" value="1"/>
</dbReference>
<dbReference type="PROSITE" id="PS51950">
    <property type="entry name" value="COV_NSP8"/>
    <property type="match status" value="1"/>
</dbReference>
<dbReference type="PROSITE" id="PS51951">
    <property type="entry name" value="COV_NSP9_SSRNA_BD"/>
    <property type="match status" value="1"/>
</dbReference>
<dbReference type="PROSITE" id="PS51442">
    <property type="entry name" value="M_PRO"/>
    <property type="match status" value="1"/>
</dbReference>
<dbReference type="PROSITE" id="PS51154">
    <property type="entry name" value="MACRO"/>
    <property type="match status" value="1"/>
</dbReference>
<dbReference type="PROSITE" id="PS51124">
    <property type="entry name" value="PEPTIDASE_C16"/>
    <property type="match status" value="2"/>
</dbReference>
<evidence type="ECO:0000250" key="1"/>
<evidence type="ECO:0000250" key="2">
    <source>
        <dbReference type="UniProtKB" id="P0DTC1"/>
    </source>
</evidence>
<evidence type="ECO:0000255" key="3"/>
<evidence type="ECO:0000255" key="4">
    <source>
        <dbReference type="PROSITE-ProRule" id="PRU00214"/>
    </source>
</evidence>
<evidence type="ECO:0000255" key="5">
    <source>
        <dbReference type="PROSITE-ProRule" id="PRU00444"/>
    </source>
</evidence>
<evidence type="ECO:0000255" key="6">
    <source>
        <dbReference type="PROSITE-ProRule" id="PRU00490"/>
    </source>
</evidence>
<evidence type="ECO:0000255" key="7">
    <source>
        <dbReference type="PROSITE-ProRule" id="PRU00772"/>
    </source>
</evidence>
<evidence type="ECO:0000255" key="8">
    <source>
        <dbReference type="PROSITE-ProRule" id="PRU01289"/>
    </source>
</evidence>
<evidence type="ECO:0000255" key="9">
    <source>
        <dbReference type="PROSITE-ProRule" id="PRU01290"/>
    </source>
</evidence>
<evidence type="ECO:0000255" key="10">
    <source>
        <dbReference type="PROSITE-ProRule" id="PRU01291"/>
    </source>
</evidence>
<evidence type="ECO:0000255" key="11">
    <source>
        <dbReference type="PROSITE-ProRule" id="PRU01294"/>
    </source>
</evidence>
<evidence type="ECO:0000255" key="12">
    <source>
        <dbReference type="PROSITE-ProRule" id="PRU01295"/>
    </source>
</evidence>
<evidence type="ECO:0000255" key="13">
    <source>
        <dbReference type="PROSITE-ProRule" id="PRU01296"/>
    </source>
</evidence>
<evidence type="ECO:0000255" key="14">
    <source>
        <dbReference type="PROSITE-ProRule" id="PRU01297"/>
    </source>
</evidence>
<evidence type="ECO:0000255" key="15">
    <source>
        <dbReference type="PROSITE-ProRule" id="PRU01307"/>
    </source>
</evidence>
<evidence type="ECO:0000255" key="16">
    <source>
        <dbReference type="PROSITE-ProRule" id="PRU01308"/>
    </source>
</evidence>
<evidence type="ECO:0000255" key="17">
    <source>
        <dbReference type="PROSITE-ProRule" id="PRU01333"/>
    </source>
</evidence>
<evidence type="ECO:0000255" key="18">
    <source>
        <dbReference type="PROSITE-ProRule" id="PRU01334"/>
    </source>
</evidence>
<evidence type="ECO:0000255" key="19">
    <source>
        <dbReference type="PROSITE-ProRule" id="PRU01335"/>
    </source>
</evidence>
<evidence type="ECO:0000255" key="20">
    <source>
        <dbReference type="PROSITE-ProRule" id="PRU01336"/>
    </source>
</evidence>
<evidence type="ECO:0000255" key="21">
    <source>
        <dbReference type="PROSITE-ProRule" id="PRU01337"/>
    </source>
</evidence>
<evidence type="ECO:0000255" key="22">
    <source>
        <dbReference type="PROSITE-ProRule" id="PRU01338"/>
    </source>
</evidence>
<evidence type="ECO:0000256" key="23">
    <source>
        <dbReference type="SAM" id="MobiDB-lite"/>
    </source>
</evidence>
<evidence type="ECO:0000305" key="24"/>
<gene>
    <name type="ORF">1a</name>
</gene>
<organism>
    <name type="scientific">Bovine coronavirus (strain Quebec)</name>
    <name type="common">BCoV</name>
    <name type="synonym">BCV</name>
    <dbReference type="NCBI Taxonomy" id="11133"/>
    <lineage>
        <taxon>Viruses</taxon>
        <taxon>Riboviria</taxon>
        <taxon>Orthornavirae</taxon>
        <taxon>Pisuviricota</taxon>
        <taxon>Pisoniviricetes</taxon>
        <taxon>Nidovirales</taxon>
        <taxon>Cornidovirineae</taxon>
        <taxon>Coronaviridae</taxon>
        <taxon>Orthocoronavirinae</taxon>
        <taxon>Betacoronavirus</taxon>
        <taxon>Embecovirus</taxon>
        <taxon>Betacoronavirus 1</taxon>
    </lineage>
</organism>
<keyword id="KW-1072">Activation of host autophagy by virus</keyword>
<keyword id="KW-1132">Decay of host mRNAs by virus</keyword>
<keyword id="KW-1015">Disulfide bond</keyword>
<keyword id="KW-0255">Endonuclease</keyword>
<keyword id="KW-1262">Eukaryotic host gene expression shutoff by virus</keyword>
<keyword id="KW-1193">Eukaryotic host translation shutoff by virus</keyword>
<keyword id="KW-1035">Host cytoplasm</keyword>
<keyword id="KW-1190">Host gene expression shutoff by virus</keyword>
<keyword id="KW-1043">Host membrane</keyword>
<keyword id="KW-1192">Host mRNA suppression by virus</keyword>
<keyword id="KW-0945">Host-virus interaction</keyword>
<keyword id="KW-0378">Hydrolase</keyword>
<keyword id="KW-1090">Inhibition of host innate immune response by virus</keyword>
<keyword id="KW-1114">Inhibition of host interferon signaling pathway by virus</keyword>
<keyword id="KW-1092">Inhibition of host IRF3 by virus</keyword>
<keyword id="KW-1095">Inhibition of host ISG15 by virus</keyword>
<keyword id="KW-1113">Inhibition of host RLR pathway by virus</keyword>
<keyword id="KW-0922">Interferon antiviral system evasion</keyword>
<keyword id="KW-0472">Membrane</keyword>
<keyword id="KW-0479">Metal-binding</keyword>
<keyword id="KW-0489">Methyltransferase</keyword>
<keyword id="KW-1127">Modulation of host ubiquitin pathway by viral deubiquitinase</keyword>
<keyword id="KW-1130">Modulation of host ubiquitin pathway by virus</keyword>
<keyword id="KW-0540">Nuclease</keyword>
<keyword id="KW-0645">Protease</keyword>
<keyword id="KW-0677">Repeat</keyword>
<keyword id="KW-0688">Ribosomal frameshifting</keyword>
<keyword id="KW-0694">RNA-binding</keyword>
<keyword id="KW-0788">Thiol protease</keyword>
<keyword id="KW-0808">Transferase</keyword>
<keyword id="KW-0812">Transmembrane</keyword>
<keyword id="KW-1133">Transmembrane helix</keyword>
<keyword id="KW-0833">Ubl conjugation pathway</keyword>
<keyword id="KW-0899">Viral immunoevasion</keyword>
<keyword id="KW-0862">Zinc</keyword>
<keyword id="KW-0863">Zinc-finger</keyword>
<accession>P0C6U1</accession>
<accession>Q8V6W7</accession>
<comment type="function">
    <text evidence="1">The papain-like proteinase 1 (PL1-PRO) and papain-like proteinase 2 (PL2-PRO) are responsible for the cleavages located at the N-terminus of the replicase polyprotein. In addition, PLP2 possesses a deubiquitinating/deISGylating activity and processes both 'Lys-48'- and 'Lys-63'-linked polyubiquitin chains from cellular substrates. Antagonizes innate immune induction of type I interferon by blocking the phosphorylation, dimerization and subsequent nuclear translocation of host IRF-3 (By similarity).</text>
</comment>
<comment type="function">
    <molecule>3C-like proteinase nsp5</molecule>
    <text evidence="7">Responsible for the majority of cleavages as it cleaves the C-terminus of replicase polyprotein at 11 sites. Recognizes substrates containing the core sequence [ILMVF]-Q-|-[SGACN]. Inhibited by the substrate-analog Cbz-Val-Asn-Ser-Thr-Leu-Gln-CMK. Also contains an ADP-ribose-1''-phosphate (ADRP)-binding function (By similarity).</text>
</comment>
<comment type="function">
    <text evidence="1">Nsp7-nsp8 hexadecamer may possibly confer processivity to the polymerase, maybe by binding to dsRNA or by producing primers utilized by the latter.</text>
</comment>
<comment type="function">
    <molecule>RNA-capping enzyme subunit nsp9</molecule>
    <text evidence="2">Catalytic subunit of viral RNA capping enzyme which catalyzes the RNA guanylyltransferase reaction for genomic and sub-genomic RNAs. The kinase-like NiRAN domain of NSP12 transfers RNA to the amino terminus of NSP9, forming a covalent RNA-protein intermediate. Subsequently, the NiRAN domain transfers RNA to GDP, forming the core cap structure GpppA-RNA. The NSP14 and NSP16 methyltransferases then add methyl groups to form functional cap structures.</text>
</comment>
<comment type="function">
    <molecule>Non-structural protein 1</molecule>
    <text evidence="1">Binds to the 40S ribosomal subunit and inhibits host translation. The nsp1-40S ribosome complex further induces an endonucleolytic cleavage near the 5'UTR of host mRNAs, targeting them for degradation. By suppressing host gene expression, nsp1 facilitates efficient viral gene expression in infected cells and evasion from host immune response (By similarity).</text>
</comment>
<comment type="catalytic activity">
    <molecule>Papain-like protease nsp3</molecule>
    <reaction evidence="2">
        <text>Thiol-dependent hydrolysis of ester, thioester, amide, peptide and isopeptide bonds formed by the C-terminal Gly of ubiquitin (a 76-residue protein attached to proteins as an intracellular targeting signal).</text>
        <dbReference type="EC" id="3.4.19.12"/>
    </reaction>
</comment>
<comment type="catalytic activity">
    <molecule>3C-like proteinase nsp5</molecule>
    <reaction evidence="2">
        <text>TSAVLQ-|-SGFRK-NH2 and SGVTFQ-|-GKFKK the two peptides corresponding to the two self-cleavage sites of the SARS 3C-like proteinase are the two most reactive peptide substrates. The enzyme exhibits a strong preference for substrates containing Gln at P1 position and Leu at P2 position.</text>
        <dbReference type="EC" id="3.4.22.69"/>
    </reaction>
</comment>
<comment type="catalytic activity">
    <molecule>RNA-capping enzyme subunit nsp9</molecule>
    <reaction evidence="2">
        <text>a 5'-end diphospho-ribonucleoside in mRNA + GTP + H(+) = a 5'-end (5'-triphosphoguanosine)-ribonucleoside in mRNA + diphosphate</text>
        <dbReference type="Rhea" id="RHEA:67012"/>
        <dbReference type="Rhea" id="RHEA-COMP:17165"/>
        <dbReference type="Rhea" id="RHEA-COMP:17166"/>
        <dbReference type="ChEBI" id="CHEBI:15378"/>
        <dbReference type="ChEBI" id="CHEBI:33019"/>
        <dbReference type="ChEBI" id="CHEBI:37565"/>
        <dbReference type="ChEBI" id="CHEBI:167616"/>
        <dbReference type="ChEBI" id="CHEBI:167617"/>
        <dbReference type="EC" id="2.7.7.50"/>
    </reaction>
    <physiologicalReaction direction="right-to-left" evidence="2">
        <dbReference type="Rhea" id="RHEA:67014"/>
    </physiologicalReaction>
</comment>
<comment type="subunit">
    <text evidence="1">3CL-PRO exists as monomer and homodimer. Eight copies of nsp7 and eight copies of nsp8 assemble to form a heterohexadecamer. Nsp9 is a dimer. Nsp10 forms a dodecamer (By similarity).</text>
</comment>
<comment type="subcellular location">
    <molecule>Papain-like protease nsp3</molecule>
    <subcellularLocation>
        <location evidence="24">Host membrane</location>
        <topology evidence="24">Multi-pass membrane protein</topology>
    </subcellularLocation>
</comment>
<comment type="subcellular location">
    <molecule>Non-structural protein 4</molecule>
    <subcellularLocation>
        <location evidence="24">Host membrane</location>
        <topology evidence="24">Multi-pass membrane protein</topology>
    </subcellularLocation>
</comment>
<comment type="subcellular location">
    <molecule>Non-structural protein 6</molecule>
    <subcellularLocation>
        <location evidence="24">Host membrane</location>
        <topology evidence="24">Multi-pass membrane protein</topology>
    </subcellularLocation>
</comment>
<comment type="subcellular location">
    <molecule>Non-structural protein 7</molecule>
    <subcellularLocation>
        <location evidence="1">Host cytoplasm</location>
        <location evidence="1">Host perinuclear region</location>
    </subcellularLocation>
    <text evidence="1">nsp7, nsp8, nsp9 and nsp10 are localized in cytoplasmic foci, largely perinuclear. Late in infection, they merge into confluent complexes (By similarity).</text>
</comment>
<comment type="subcellular location">
    <molecule>Non-structural protein 8</molecule>
    <subcellularLocation>
        <location evidence="1">Host cytoplasm</location>
        <location evidence="1">Host perinuclear region</location>
    </subcellularLocation>
    <text evidence="1">nsp7, nsp8, nsp9 and nsp10 are localized in cytoplasmic foci, largely perinuclear. Late in infection, they merge into confluent complexes (By similarity).</text>
</comment>
<comment type="subcellular location">
    <molecule>RNA-capping enzyme subunit nsp9</molecule>
    <subcellularLocation>
        <location evidence="1">Host cytoplasm</location>
        <location evidence="1">Host perinuclear region</location>
    </subcellularLocation>
    <text evidence="1">nsp7, nsp8, nsp9 and nsp10 are localized in cytoplasmic foci, largely perinuclear. Late in infection, they merge into confluent complexes (By similarity).</text>
</comment>
<comment type="subcellular location">
    <molecule>Non-structural protein 10</molecule>
    <subcellularLocation>
        <location evidence="1">Host cytoplasm</location>
        <location evidence="1">Host perinuclear region</location>
    </subcellularLocation>
    <text evidence="1">nsp7, nsp8, nsp9 and nsp10 are localized in cytoplasmic foci, largely perinuclear. Late in infection, they merge into confluent complexes (By similarity).</text>
</comment>
<comment type="alternative products">
    <event type="ribosomal frameshifting"/>
    <isoform>
        <id>P0C6U1-1</id>
        <name>Replicase polyprotein 1a</name>
        <name>pp1a</name>
        <name>ORF1a polyprotein</name>
        <sequence type="displayed"/>
    </isoform>
    <isoform>
        <id>P0C6X0-1</id>
        <name>Replicase polyprotein 1ab</name>
        <name>pp1ab</name>
        <sequence type="external"/>
    </isoform>
</comment>
<comment type="domain">
    <text>The hydrophobic domains (HD) could mediate the membrane association of the replication complex and thereby alter the architecture of the host cell membrane.</text>
</comment>
<comment type="PTM">
    <text evidence="1">Specific enzymatic cleavages in vivo by its own proteases yield mature proteins. 3CL-PRO and PL-PRO proteinases are autocatalytically processed (By similarity).</text>
</comment>
<comment type="miscellaneous">
    <molecule>Isoform Replicase polyprotein 1a</molecule>
    <text>Produced by conventional translation.</text>
</comment>
<comment type="similarity">
    <text evidence="24">Belongs to the coronaviruses polyprotein 1ab family.</text>
</comment>